<sequence length="477" mass="51518">MTTQLQHARGGTVTDAMERVAERENRDAEFVRQQVADGQAVIPANHGHDALDPMIIGREFATKVNANIGNSEPASGPEAELQKLHTAVHYGADTVMDLSTGGDLDTIRTENIAYSPVPVGTVPIYEAVTRVDDASDLTPELLLDVVEKQAEQGVDYMTLHAGVLAEHLPLTDGRTTGIVSRGGSILARWMEEHGEQNPLYERFDDLCEILAAYDVTVSLGDGLRPGSLADASDAAQFAELDTLGELTRRAWDHGVQVMVEGPGHVPMDEIADNVERQQDVCDGAPFYVLGPLVTDVAPGYDHITSAIGATEAARAGAAMLCYVTPKEHLGLPDAEDVRDGLAAYRIAAHSADVANGRPGARDWDDAVSEARYAFDWRRQFELALDPGRARNYHDQTLPEDNYKEARFCSMCGVEFCSMRIDQDAREAGDGMDGLESRTDLDSSAAAAVNRPPTGVHRAEKLDDIPCPVAEDDVAADD</sequence>
<comment type="function">
    <text evidence="1">Catalyzes the synthesis of the hydroxymethylpyrimidine phosphate (HMP-P) moiety of thiamine from aminoimidazole ribotide (AIR) in a radical S-adenosyl-L-methionine (SAM)-dependent reaction.</text>
</comment>
<comment type="catalytic activity">
    <reaction evidence="1">
        <text>5-amino-1-(5-phospho-beta-D-ribosyl)imidazole + S-adenosyl-L-methionine = 4-amino-2-methyl-5-(phosphooxymethyl)pyrimidine + CO + 5'-deoxyadenosine + formate + L-methionine + 3 H(+)</text>
        <dbReference type="Rhea" id="RHEA:24840"/>
        <dbReference type="ChEBI" id="CHEBI:15378"/>
        <dbReference type="ChEBI" id="CHEBI:15740"/>
        <dbReference type="ChEBI" id="CHEBI:17245"/>
        <dbReference type="ChEBI" id="CHEBI:17319"/>
        <dbReference type="ChEBI" id="CHEBI:57844"/>
        <dbReference type="ChEBI" id="CHEBI:58354"/>
        <dbReference type="ChEBI" id="CHEBI:59789"/>
        <dbReference type="ChEBI" id="CHEBI:137981"/>
        <dbReference type="EC" id="4.1.99.17"/>
    </reaction>
</comment>
<comment type="cofactor">
    <cofactor evidence="1">
        <name>[4Fe-4S] cluster</name>
        <dbReference type="ChEBI" id="CHEBI:49883"/>
    </cofactor>
    <text evidence="1">Binds 1 [4Fe-4S] cluster per subunit. The cluster is coordinated with 3 cysteines and an exchangeable S-adenosyl-L-methionine.</text>
</comment>
<comment type="pathway">
    <text evidence="1">Cofactor biosynthesis; thiamine diphosphate biosynthesis.</text>
</comment>
<comment type="similarity">
    <text evidence="1">Belongs to the ThiC family.</text>
</comment>
<feature type="chain" id="PRO_0000242329" description="Phosphomethylpyrimidine synthase">
    <location>
        <begin position="1"/>
        <end position="477"/>
    </location>
</feature>
<feature type="region of interest" description="Disordered" evidence="2">
    <location>
        <begin position="427"/>
        <end position="477"/>
    </location>
</feature>
<feature type="compositionally biased region" description="Basic and acidic residues" evidence="2">
    <location>
        <begin position="427"/>
        <end position="440"/>
    </location>
</feature>
<feature type="binding site" evidence="1">
    <location>
        <position position="67"/>
    </location>
    <ligand>
        <name>substrate</name>
    </ligand>
</feature>
<feature type="binding site" evidence="1">
    <location>
        <position position="96"/>
    </location>
    <ligand>
        <name>substrate</name>
    </ligand>
</feature>
<feature type="binding site" evidence="1">
    <location>
        <position position="125"/>
    </location>
    <ligand>
        <name>substrate</name>
    </ligand>
</feature>
<feature type="binding site" evidence="1">
    <location>
        <position position="160"/>
    </location>
    <ligand>
        <name>substrate</name>
    </ligand>
</feature>
<feature type="binding site" evidence="1">
    <location>
        <begin position="180"/>
        <end position="182"/>
    </location>
    <ligand>
        <name>substrate</name>
    </ligand>
</feature>
<feature type="binding site" evidence="1">
    <location>
        <begin position="221"/>
        <end position="224"/>
    </location>
    <ligand>
        <name>substrate</name>
    </ligand>
</feature>
<feature type="binding site" evidence="1">
    <location>
        <position position="260"/>
    </location>
    <ligand>
        <name>substrate</name>
    </ligand>
</feature>
<feature type="binding site" evidence="1">
    <location>
        <position position="264"/>
    </location>
    <ligand>
        <name>Zn(2+)</name>
        <dbReference type="ChEBI" id="CHEBI:29105"/>
    </ligand>
</feature>
<feature type="binding site" evidence="1">
    <location>
        <position position="287"/>
    </location>
    <ligand>
        <name>substrate</name>
    </ligand>
</feature>
<feature type="binding site" evidence="1">
    <location>
        <position position="328"/>
    </location>
    <ligand>
        <name>Zn(2+)</name>
        <dbReference type="ChEBI" id="CHEBI:29105"/>
    </ligand>
</feature>
<feature type="binding site" evidence="1">
    <location>
        <position position="408"/>
    </location>
    <ligand>
        <name>[4Fe-4S] cluster</name>
        <dbReference type="ChEBI" id="CHEBI:49883"/>
        <note>4Fe-4S-S-AdoMet</note>
    </ligand>
</feature>
<feature type="binding site" evidence="1">
    <location>
        <position position="411"/>
    </location>
    <ligand>
        <name>[4Fe-4S] cluster</name>
        <dbReference type="ChEBI" id="CHEBI:49883"/>
        <note>4Fe-4S-S-AdoMet</note>
    </ligand>
</feature>
<feature type="binding site" evidence="1">
    <location>
        <position position="416"/>
    </location>
    <ligand>
        <name>[4Fe-4S] cluster</name>
        <dbReference type="ChEBI" id="CHEBI:49883"/>
        <note>4Fe-4S-S-AdoMet</note>
    </ligand>
</feature>
<accession>Q3IRP7</accession>
<protein>
    <recommendedName>
        <fullName evidence="1">Phosphomethylpyrimidine synthase</fullName>
        <ecNumber evidence="1">4.1.99.17</ecNumber>
    </recommendedName>
    <alternativeName>
        <fullName evidence="1">Hydroxymethylpyrimidine phosphate synthase</fullName>
        <shortName evidence="1">HMP-P synthase</shortName>
        <shortName evidence="1">HMP-phosphate synthase</shortName>
        <shortName evidence="1">HMPP synthase</shortName>
    </alternativeName>
    <alternativeName>
        <fullName evidence="1">Thiamine biosynthesis protein ThiC</fullName>
    </alternativeName>
</protein>
<name>THIC_NATPD</name>
<proteinExistence type="inferred from homology"/>
<reference key="1">
    <citation type="journal article" date="2005" name="Genome Res.">
        <title>Living with two extremes: conclusions from the genome sequence of Natronomonas pharaonis.</title>
        <authorList>
            <person name="Falb M."/>
            <person name="Pfeiffer F."/>
            <person name="Palm P."/>
            <person name="Rodewald K."/>
            <person name="Hickmann V."/>
            <person name="Tittor J."/>
            <person name="Oesterhelt D."/>
        </authorList>
    </citation>
    <scope>NUCLEOTIDE SEQUENCE [LARGE SCALE GENOMIC DNA]</scope>
    <source>
        <strain>ATCC 35678 / DSM 2160 / CIP 103997 / JCM 8858 / NBRC 14720 / NCIMB 2260 / Gabara</strain>
    </source>
</reference>
<gene>
    <name evidence="1" type="primary">thiC</name>
    <name type="ordered locus">NP_2210A</name>
</gene>
<keyword id="KW-0004">4Fe-4S</keyword>
<keyword id="KW-0408">Iron</keyword>
<keyword id="KW-0411">Iron-sulfur</keyword>
<keyword id="KW-0456">Lyase</keyword>
<keyword id="KW-0479">Metal-binding</keyword>
<keyword id="KW-1185">Reference proteome</keyword>
<keyword id="KW-0949">S-adenosyl-L-methionine</keyword>
<keyword id="KW-0784">Thiamine biosynthesis</keyword>
<keyword id="KW-0862">Zinc</keyword>
<dbReference type="EC" id="4.1.99.17" evidence="1"/>
<dbReference type="EMBL" id="CR936257">
    <property type="protein sequence ID" value="CAI49196.1"/>
    <property type="molecule type" value="Genomic_DNA"/>
</dbReference>
<dbReference type="RefSeq" id="WP_011322823.1">
    <property type="nucleotide sequence ID" value="NC_007426.1"/>
</dbReference>
<dbReference type="SMR" id="Q3IRP7"/>
<dbReference type="STRING" id="348780.NP_2210A"/>
<dbReference type="EnsemblBacteria" id="CAI49196">
    <property type="protein sequence ID" value="CAI49196"/>
    <property type="gene ID" value="NP_2210A"/>
</dbReference>
<dbReference type="GeneID" id="3703244"/>
<dbReference type="KEGG" id="nph:NP_2210A"/>
<dbReference type="eggNOG" id="arCOG02741">
    <property type="taxonomic scope" value="Archaea"/>
</dbReference>
<dbReference type="HOGENOM" id="CLU_013181_2_1_2"/>
<dbReference type="OrthoDB" id="335406at2157"/>
<dbReference type="UniPathway" id="UPA00060"/>
<dbReference type="Proteomes" id="UP000002698">
    <property type="component" value="Chromosome"/>
</dbReference>
<dbReference type="GO" id="GO:0051539">
    <property type="term" value="F:4 iron, 4 sulfur cluster binding"/>
    <property type="evidence" value="ECO:0007669"/>
    <property type="project" value="UniProtKB-KW"/>
</dbReference>
<dbReference type="GO" id="GO:0016830">
    <property type="term" value="F:carbon-carbon lyase activity"/>
    <property type="evidence" value="ECO:0007669"/>
    <property type="project" value="InterPro"/>
</dbReference>
<dbReference type="GO" id="GO:0008270">
    <property type="term" value="F:zinc ion binding"/>
    <property type="evidence" value="ECO:0007669"/>
    <property type="project" value="UniProtKB-UniRule"/>
</dbReference>
<dbReference type="GO" id="GO:0009228">
    <property type="term" value="P:thiamine biosynthetic process"/>
    <property type="evidence" value="ECO:0007669"/>
    <property type="project" value="UniProtKB-KW"/>
</dbReference>
<dbReference type="GO" id="GO:0009229">
    <property type="term" value="P:thiamine diphosphate biosynthetic process"/>
    <property type="evidence" value="ECO:0007669"/>
    <property type="project" value="UniProtKB-UniRule"/>
</dbReference>
<dbReference type="FunFam" id="3.20.20.540:FF:000001">
    <property type="entry name" value="Phosphomethylpyrimidine synthase"/>
    <property type="match status" value="1"/>
</dbReference>
<dbReference type="Gene3D" id="6.10.250.620">
    <property type="match status" value="1"/>
</dbReference>
<dbReference type="Gene3D" id="3.20.20.540">
    <property type="entry name" value="Radical SAM ThiC family, central domain"/>
    <property type="match status" value="1"/>
</dbReference>
<dbReference type="HAMAP" id="MF_00089">
    <property type="entry name" value="ThiC"/>
    <property type="match status" value="1"/>
</dbReference>
<dbReference type="InterPro" id="IPR037509">
    <property type="entry name" value="ThiC"/>
</dbReference>
<dbReference type="InterPro" id="IPR038521">
    <property type="entry name" value="ThiC/Bza_core_dom"/>
</dbReference>
<dbReference type="InterPro" id="IPR002817">
    <property type="entry name" value="ThiC/BzaA/B"/>
</dbReference>
<dbReference type="NCBIfam" id="NF006763">
    <property type="entry name" value="PRK09284.1"/>
    <property type="match status" value="1"/>
</dbReference>
<dbReference type="NCBIfam" id="NF009895">
    <property type="entry name" value="PRK13352.1"/>
    <property type="match status" value="1"/>
</dbReference>
<dbReference type="NCBIfam" id="TIGR00190">
    <property type="entry name" value="thiC"/>
    <property type="match status" value="1"/>
</dbReference>
<dbReference type="PANTHER" id="PTHR30557:SF1">
    <property type="entry name" value="PHOSPHOMETHYLPYRIMIDINE SYNTHASE, CHLOROPLASTIC"/>
    <property type="match status" value="1"/>
</dbReference>
<dbReference type="PANTHER" id="PTHR30557">
    <property type="entry name" value="THIAMINE BIOSYNTHESIS PROTEIN THIC"/>
    <property type="match status" value="1"/>
</dbReference>
<dbReference type="Pfam" id="PF01964">
    <property type="entry name" value="ThiC_Rad_SAM"/>
    <property type="match status" value="1"/>
</dbReference>
<dbReference type="SFLD" id="SFLDF00407">
    <property type="entry name" value="phosphomethylpyrimidine_syntha"/>
    <property type="match status" value="1"/>
</dbReference>
<dbReference type="SFLD" id="SFLDG01114">
    <property type="entry name" value="phosphomethylpyrimidine_syntha"/>
    <property type="match status" value="1"/>
</dbReference>
<dbReference type="SFLD" id="SFLDS00113">
    <property type="entry name" value="Radical_SAM_Phosphomethylpyrim"/>
    <property type="match status" value="1"/>
</dbReference>
<evidence type="ECO:0000255" key="1">
    <source>
        <dbReference type="HAMAP-Rule" id="MF_00089"/>
    </source>
</evidence>
<evidence type="ECO:0000256" key="2">
    <source>
        <dbReference type="SAM" id="MobiDB-lite"/>
    </source>
</evidence>
<organism>
    <name type="scientific">Natronomonas pharaonis (strain ATCC 35678 / DSM 2160 / CIP 103997 / JCM 8858 / NBRC 14720 / NCIMB 2260 / Gabara)</name>
    <name type="common">Halobacterium pharaonis</name>
    <dbReference type="NCBI Taxonomy" id="348780"/>
    <lineage>
        <taxon>Archaea</taxon>
        <taxon>Methanobacteriati</taxon>
        <taxon>Methanobacteriota</taxon>
        <taxon>Stenosarchaea group</taxon>
        <taxon>Halobacteria</taxon>
        <taxon>Halobacteriales</taxon>
        <taxon>Haloarculaceae</taxon>
        <taxon>Natronomonas</taxon>
    </lineage>
</organism>